<proteinExistence type="inferred from homology"/>
<comment type="function">
    <text evidence="1">Required for the assembly and/or stability of the 40S ribosomal subunit. Required for the processing of the 20S rRNA-precursor to mature 18S rRNA in a late step of the maturation of 40S ribosomal subunits.</text>
</comment>
<comment type="subunit">
    <text evidence="1">Component of the small ribosomal subunit. Mature ribosomes consist of a small (40S) and a large (60S) subunit. The 40S subunit contains about 33 different proteins and 1 molecule of RNA (18S). The 60S subunit contains about 49 different proteins and 3 molecules of RNA (25S, 5.8S and 5S). Interacts with ribosomal protein S21.</text>
</comment>
<comment type="subcellular location">
    <subcellularLocation>
        <location evidence="1">Cytoplasm</location>
    </subcellularLocation>
</comment>
<comment type="similarity">
    <text evidence="1">Belongs to the universal ribosomal protein uS2 family.</text>
</comment>
<dbReference type="EMBL" id="AM910988">
    <property type="protein sequence ID" value="CAQ38949.1"/>
    <property type="molecule type" value="Genomic_DNA"/>
</dbReference>
<dbReference type="RefSeq" id="XP_002261786.1">
    <property type="nucleotide sequence ID" value="XM_002261750.1"/>
</dbReference>
<dbReference type="SMR" id="B3L230"/>
<dbReference type="STRING" id="5851.B3L230"/>
<dbReference type="EnsemblProtists" id="CAQ38949">
    <property type="protein sequence ID" value="CAQ38949"/>
    <property type="gene ID" value="PKH_061110"/>
</dbReference>
<dbReference type="GeneID" id="7319596"/>
<dbReference type="KEGG" id="pkn:PKNH_0611200"/>
<dbReference type="VEuPathDB" id="PlasmoDB:PKNH_0611200"/>
<dbReference type="HOGENOM" id="CLU_058171_2_0_1"/>
<dbReference type="InParanoid" id="B3L230"/>
<dbReference type="OMA" id="VKNFFEP"/>
<dbReference type="OrthoDB" id="414863at2759"/>
<dbReference type="PhylomeDB" id="B3L230"/>
<dbReference type="Proteomes" id="UP000031513">
    <property type="component" value="Chromosome 6"/>
</dbReference>
<dbReference type="GO" id="GO:0022627">
    <property type="term" value="C:cytosolic small ribosomal subunit"/>
    <property type="evidence" value="ECO:0007669"/>
    <property type="project" value="UniProtKB-UniRule"/>
</dbReference>
<dbReference type="GO" id="GO:0003735">
    <property type="term" value="F:structural constituent of ribosome"/>
    <property type="evidence" value="ECO:0007669"/>
    <property type="project" value="UniProtKB-UniRule"/>
</dbReference>
<dbReference type="GO" id="GO:0000028">
    <property type="term" value="P:ribosomal small subunit assembly"/>
    <property type="evidence" value="ECO:0007669"/>
    <property type="project" value="UniProtKB-UniRule"/>
</dbReference>
<dbReference type="GO" id="GO:0006412">
    <property type="term" value="P:translation"/>
    <property type="evidence" value="ECO:0007669"/>
    <property type="project" value="UniProtKB-UniRule"/>
</dbReference>
<dbReference type="CDD" id="cd01425">
    <property type="entry name" value="RPS2"/>
    <property type="match status" value="1"/>
</dbReference>
<dbReference type="FunFam" id="3.40.50.10490:FF:000012">
    <property type="entry name" value="40S ribosomal protein SA"/>
    <property type="match status" value="1"/>
</dbReference>
<dbReference type="Gene3D" id="3.40.50.10490">
    <property type="entry name" value="Glucose-6-phosphate isomerase like protein, domain 1"/>
    <property type="match status" value="1"/>
</dbReference>
<dbReference type="HAMAP" id="MF_03015">
    <property type="entry name" value="Ribosomal_S2_euk"/>
    <property type="match status" value="1"/>
</dbReference>
<dbReference type="InterPro" id="IPR001865">
    <property type="entry name" value="Ribosomal_uS2"/>
</dbReference>
<dbReference type="InterPro" id="IPR018130">
    <property type="entry name" value="Ribosomal_uS2_CS"/>
</dbReference>
<dbReference type="InterPro" id="IPR027498">
    <property type="entry name" value="Ribosomal_uS2_euk"/>
</dbReference>
<dbReference type="InterPro" id="IPR005707">
    <property type="entry name" value="Ribosomal_uS2_euk/arc"/>
</dbReference>
<dbReference type="InterPro" id="IPR023591">
    <property type="entry name" value="Ribosomal_uS2_flav_dom_sf"/>
</dbReference>
<dbReference type="NCBIfam" id="TIGR01012">
    <property type="entry name" value="uS2_euk_arch"/>
    <property type="match status" value="1"/>
</dbReference>
<dbReference type="PANTHER" id="PTHR11489">
    <property type="entry name" value="40S RIBOSOMAL PROTEIN SA"/>
    <property type="match status" value="1"/>
</dbReference>
<dbReference type="Pfam" id="PF00318">
    <property type="entry name" value="Ribosomal_S2"/>
    <property type="match status" value="2"/>
</dbReference>
<dbReference type="PRINTS" id="PR00395">
    <property type="entry name" value="RIBOSOMALS2"/>
</dbReference>
<dbReference type="SUPFAM" id="SSF52313">
    <property type="entry name" value="Ribosomal protein S2"/>
    <property type="match status" value="1"/>
</dbReference>
<dbReference type="PROSITE" id="PS00962">
    <property type="entry name" value="RIBOSOMAL_S2_1"/>
    <property type="match status" value="1"/>
</dbReference>
<dbReference type="PROSITE" id="PS00963">
    <property type="entry name" value="RIBOSOMAL_S2_2"/>
    <property type="match status" value="1"/>
</dbReference>
<keyword id="KW-0963">Cytoplasm</keyword>
<keyword id="KW-1185">Reference proteome</keyword>
<keyword id="KW-0687">Ribonucleoprotein</keyword>
<keyword id="KW-0689">Ribosomal protein</keyword>
<organism>
    <name type="scientific">Plasmodium knowlesi (strain H)</name>
    <dbReference type="NCBI Taxonomy" id="5851"/>
    <lineage>
        <taxon>Eukaryota</taxon>
        <taxon>Sar</taxon>
        <taxon>Alveolata</taxon>
        <taxon>Apicomplexa</taxon>
        <taxon>Aconoidasida</taxon>
        <taxon>Haemosporida</taxon>
        <taxon>Plasmodiidae</taxon>
        <taxon>Plasmodium</taxon>
        <taxon>Plasmodium (Plasmodium)</taxon>
    </lineage>
</organism>
<evidence type="ECO:0000255" key="1">
    <source>
        <dbReference type="HAMAP-Rule" id="MF_03015"/>
    </source>
</evidence>
<evidence type="ECO:0000305" key="2"/>
<gene>
    <name type="ORF">PKH_061110</name>
</gene>
<name>RSSA_PLAKH</name>
<reference key="1">
    <citation type="journal article" date="2008" name="Nature">
        <title>The genome of the simian and human malaria parasite Plasmodium knowlesi.</title>
        <authorList>
            <person name="Pain A."/>
            <person name="Boehme U."/>
            <person name="Berry A.E."/>
            <person name="Mungall K."/>
            <person name="Finn R.D."/>
            <person name="Jackson A.P."/>
            <person name="Mourier T."/>
            <person name="Mistry J."/>
            <person name="Pasini E.M."/>
            <person name="Aslett M.A."/>
            <person name="Balasubrammaniam S."/>
            <person name="Borgwardt K."/>
            <person name="Brooks K."/>
            <person name="Carret C."/>
            <person name="Carver T.J."/>
            <person name="Cherevach I."/>
            <person name="Chillingworth T."/>
            <person name="Clark T.G."/>
            <person name="Galinski M.R."/>
            <person name="Hall N."/>
            <person name="Harper D."/>
            <person name="Harris D."/>
            <person name="Hauser H."/>
            <person name="Ivens A."/>
            <person name="Janssen C.S."/>
            <person name="Keane T."/>
            <person name="Larke N."/>
            <person name="Lapp S."/>
            <person name="Marti M."/>
            <person name="Moule S."/>
            <person name="Meyer I.M."/>
            <person name="Ormond D."/>
            <person name="Peters N."/>
            <person name="Sanders M."/>
            <person name="Sanders S."/>
            <person name="Sargeant T.J."/>
            <person name="Simmonds M."/>
            <person name="Smith F."/>
            <person name="Squares R."/>
            <person name="Thurston S."/>
            <person name="Tivey A.R."/>
            <person name="Walker D."/>
            <person name="White B."/>
            <person name="Zuiderwijk E."/>
            <person name="Churcher C."/>
            <person name="Quail M.A."/>
            <person name="Cowman A.F."/>
            <person name="Turner C.M.R."/>
            <person name="Rajandream M.A."/>
            <person name="Kocken C.H.M."/>
            <person name="Thomas A.W."/>
            <person name="Newbold C.I."/>
            <person name="Barrell B.G."/>
            <person name="Berriman M."/>
        </authorList>
    </citation>
    <scope>NUCLEOTIDE SEQUENCE [LARGE SCALE GENOMIC DNA]</scope>
    <source>
        <strain>H</strain>
    </source>
</reference>
<sequence>MSTNKKVQSPKEESIAKMLICKVHIGTKNLENKMKRYVYTRAKDGVHILNLAKTYEKLQLAARIIVAINNPADVVVVSARPFGSRAVLKFAQYTGAQAIAGRWTPGMLTNQIIQKFTEPRLLIVTDPRTDAQPVKESAYANIPVIALCDSDSPLEHVDIAIPCNNKGKESIALMYWLLAQEVLYLKGTLPRSKPWNVMVDMFLWRDPEQFELKNLAIEETAPAAPHLTENQFATEAPYEEWNKKEEWNDNANEEWKNPIAAEEW</sequence>
<protein>
    <recommendedName>
        <fullName evidence="1">Small ribosomal subunit protein uS2</fullName>
    </recommendedName>
    <alternativeName>
        <fullName evidence="2">40S ribosomal protein SA</fullName>
    </alternativeName>
</protein>
<feature type="chain" id="PRO_0000371608" description="Small ribosomal subunit protein uS2">
    <location>
        <begin position="1"/>
        <end position="264"/>
    </location>
</feature>
<accession>B3L230</accession>